<protein>
    <recommendedName>
        <fullName>Nicotianamine synthase 1</fullName>
        <ecNumber>2.5.1.43</ecNumber>
    </recommendedName>
    <alternativeName>
        <fullName>S-adenosyl-L-methionine:S-adenosyl-L-methionine:S-adenosyl-methionine 3-amino-3-carboxypropyltransferase 1</fullName>
        <shortName>AtNAS1</shortName>
    </alternativeName>
</protein>
<evidence type="ECO:0000305" key="1"/>
<comment type="function">
    <text>Synthesizes nicotianamine, a polyamine which serves as a sensor for the physiological iron status within the plant, and/or might be involved in the transport of iron.</text>
</comment>
<comment type="catalytic activity">
    <reaction>
        <text>3 S-adenosyl-L-methionine = nicotianamine + 3 S-methyl-5'-thioadenosine + 3 H(+)</text>
        <dbReference type="Rhea" id="RHEA:16481"/>
        <dbReference type="ChEBI" id="CHEBI:15378"/>
        <dbReference type="ChEBI" id="CHEBI:17509"/>
        <dbReference type="ChEBI" id="CHEBI:58249"/>
        <dbReference type="ChEBI" id="CHEBI:59789"/>
        <dbReference type="EC" id="2.5.1.43"/>
    </reaction>
</comment>
<comment type="tissue specificity">
    <text>In shoots and roots.</text>
</comment>
<comment type="induction">
    <text>Constitutively expressed.</text>
</comment>
<comment type="similarity">
    <text evidence="1">Belongs to the nicotianamine synthase (NAS)-like family.</text>
</comment>
<keyword id="KW-1185">Reference proteome</keyword>
<keyword id="KW-0949">S-adenosyl-L-methionine</keyword>
<keyword id="KW-0808">Transferase</keyword>
<gene>
    <name type="primary">NAS1</name>
    <name type="ordered locus">At5g04950</name>
    <name type="ORF">MUG13.19</name>
</gene>
<feature type="chain" id="PRO_0000212700" description="Nicotianamine synthase 1">
    <location>
        <begin position="1"/>
        <end position="320"/>
    </location>
</feature>
<feature type="sequence conflict" description="In Ref. 1; BAA74589." evidence="1" ref="1">
    <original>G</original>
    <variation>A</variation>
    <location>
        <position position="193"/>
    </location>
</feature>
<feature type="sequence conflict" description="In Ref. 1; BAA74589." evidence="1" ref="1">
    <original>S</original>
    <variation>R</variation>
    <location>
        <position position="234"/>
    </location>
</feature>
<feature type="sequence conflict" description="In Ref. 1; BAA74589." evidence="1" ref="1">
    <original>A</original>
    <variation>T</variation>
    <location>
        <position position="318"/>
    </location>
</feature>
<reference key="1">
    <citation type="journal article" date="1999" name="Soil Sci. Plant Nutr.">
        <title>Cloning of nicotianamine synthase genes from Arabidopsis thaliana.</title>
        <authorList>
            <person name="Suzuki K."/>
            <person name="Higuchi K."/>
            <person name="Nakanishi H."/>
            <person name="Nishizawa N.-K."/>
            <person name="Mori S."/>
        </authorList>
    </citation>
    <scope>NUCLEOTIDE SEQUENCE [GENOMIC DNA]</scope>
    <source>
        <strain>cv. Columbia</strain>
    </source>
</reference>
<reference key="2">
    <citation type="journal article" date="1997" name="DNA Res.">
        <title>Structural analysis of Arabidopsis thaliana chromosome 5. I. Sequence features of the 1.6 Mb regions covered by twenty physically assigned P1 clones.</title>
        <authorList>
            <person name="Sato S."/>
            <person name="Kotani H."/>
            <person name="Nakamura Y."/>
            <person name="Kaneko T."/>
            <person name="Asamizu E."/>
            <person name="Fukami M."/>
            <person name="Miyajima N."/>
            <person name="Tabata S."/>
        </authorList>
    </citation>
    <scope>NUCLEOTIDE SEQUENCE [LARGE SCALE GENOMIC DNA]</scope>
    <source>
        <strain>cv. Columbia</strain>
    </source>
</reference>
<reference key="3">
    <citation type="journal article" date="2017" name="Plant J.">
        <title>Araport11: a complete reannotation of the Arabidopsis thaliana reference genome.</title>
        <authorList>
            <person name="Cheng C.Y."/>
            <person name="Krishnakumar V."/>
            <person name="Chan A.P."/>
            <person name="Thibaud-Nissen F."/>
            <person name="Schobel S."/>
            <person name="Town C.D."/>
        </authorList>
    </citation>
    <scope>GENOME REANNOTATION</scope>
    <source>
        <strain>cv. Columbia</strain>
    </source>
</reference>
<reference key="4">
    <citation type="journal article" date="2003" name="Science">
        <title>Empirical analysis of transcriptional activity in the Arabidopsis genome.</title>
        <authorList>
            <person name="Yamada K."/>
            <person name="Lim J."/>
            <person name="Dale J.M."/>
            <person name="Chen H."/>
            <person name="Shinn P."/>
            <person name="Palm C.J."/>
            <person name="Southwick A.M."/>
            <person name="Wu H.C."/>
            <person name="Kim C.J."/>
            <person name="Nguyen M."/>
            <person name="Pham P.K."/>
            <person name="Cheuk R.F."/>
            <person name="Karlin-Newmann G."/>
            <person name="Liu S.X."/>
            <person name="Lam B."/>
            <person name="Sakano H."/>
            <person name="Wu T."/>
            <person name="Yu G."/>
            <person name="Miranda M."/>
            <person name="Quach H.L."/>
            <person name="Tripp M."/>
            <person name="Chang C.H."/>
            <person name="Lee J.M."/>
            <person name="Toriumi M.J."/>
            <person name="Chan M.M."/>
            <person name="Tang C.C."/>
            <person name="Onodera C.S."/>
            <person name="Deng J.M."/>
            <person name="Akiyama K."/>
            <person name="Ansari Y."/>
            <person name="Arakawa T."/>
            <person name="Banh J."/>
            <person name="Banno F."/>
            <person name="Bowser L."/>
            <person name="Brooks S.Y."/>
            <person name="Carninci P."/>
            <person name="Chao Q."/>
            <person name="Choy N."/>
            <person name="Enju A."/>
            <person name="Goldsmith A.D."/>
            <person name="Gurjal M."/>
            <person name="Hansen N.F."/>
            <person name="Hayashizaki Y."/>
            <person name="Johnson-Hopson C."/>
            <person name="Hsuan V.W."/>
            <person name="Iida K."/>
            <person name="Karnes M."/>
            <person name="Khan S."/>
            <person name="Koesema E."/>
            <person name="Ishida J."/>
            <person name="Jiang P.X."/>
            <person name="Jones T."/>
            <person name="Kawai J."/>
            <person name="Kamiya A."/>
            <person name="Meyers C."/>
            <person name="Nakajima M."/>
            <person name="Narusaka M."/>
            <person name="Seki M."/>
            <person name="Sakurai T."/>
            <person name="Satou M."/>
            <person name="Tamse R."/>
            <person name="Vaysberg M."/>
            <person name="Wallender E.K."/>
            <person name="Wong C."/>
            <person name="Yamamura Y."/>
            <person name="Yuan S."/>
            <person name="Shinozaki K."/>
            <person name="Davis R.W."/>
            <person name="Theologis A."/>
            <person name="Ecker J.R."/>
        </authorList>
    </citation>
    <scope>NUCLEOTIDE SEQUENCE [LARGE SCALE MRNA]</scope>
    <source>
        <strain>cv. Columbia</strain>
    </source>
</reference>
<dbReference type="EC" id="2.5.1.43"/>
<dbReference type="EMBL" id="AB021934">
    <property type="protein sequence ID" value="BAA74589.1"/>
    <property type="molecule type" value="Genomic_DNA"/>
</dbReference>
<dbReference type="EMBL" id="AB005245">
    <property type="protein sequence ID" value="BAB11517.1"/>
    <property type="molecule type" value="Genomic_DNA"/>
</dbReference>
<dbReference type="EMBL" id="CP002688">
    <property type="protein sequence ID" value="AED90808.1"/>
    <property type="molecule type" value="Genomic_DNA"/>
</dbReference>
<dbReference type="EMBL" id="AY072364">
    <property type="protein sequence ID" value="AAL62356.1"/>
    <property type="molecule type" value="mRNA"/>
</dbReference>
<dbReference type="EMBL" id="BT000392">
    <property type="protein sequence ID" value="AAN15711.1"/>
    <property type="molecule type" value="mRNA"/>
</dbReference>
<dbReference type="RefSeq" id="NP_196114.1">
    <property type="nucleotide sequence ID" value="NM_120577.4"/>
</dbReference>
<dbReference type="SMR" id="Q9FF79"/>
<dbReference type="FunCoup" id="Q9FF79">
    <property type="interactions" value="123"/>
</dbReference>
<dbReference type="STRING" id="3702.Q9FF79"/>
<dbReference type="GlyGen" id="Q9FF79">
    <property type="glycosylation" value="1 site"/>
</dbReference>
<dbReference type="PaxDb" id="3702-AT5G04950.1"/>
<dbReference type="ProteomicsDB" id="251090"/>
<dbReference type="DNASU" id="830377"/>
<dbReference type="EnsemblPlants" id="AT5G04950.1">
    <property type="protein sequence ID" value="AT5G04950.1"/>
    <property type="gene ID" value="AT5G04950"/>
</dbReference>
<dbReference type="GeneID" id="830377"/>
<dbReference type="Gramene" id="AT5G04950.1">
    <property type="protein sequence ID" value="AT5G04950.1"/>
    <property type="gene ID" value="AT5G04950"/>
</dbReference>
<dbReference type="KEGG" id="ath:AT5G04950"/>
<dbReference type="Araport" id="AT5G04950"/>
<dbReference type="TAIR" id="AT5G04950">
    <property type="gene designation" value="NAS1"/>
</dbReference>
<dbReference type="eggNOG" id="ENOG502QTU6">
    <property type="taxonomic scope" value="Eukaryota"/>
</dbReference>
<dbReference type="HOGENOM" id="CLU_031919_1_1_1"/>
<dbReference type="InParanoid" id="Q9FF79"/>
<dbReference type="OMA" id="CHSQVIG"/>
<dbReference type="OrthoDB" id="1858069at2759"/>
<dbReference type="PhylomeDB" id="Q9FF79"/>
<dbReference type="BioCyc" id="ARA:AT5G04950-MONOMER"/>
<dbReference type="BRENDA" id="2.5.1.43">
    <property type="organism ID" value="399"/>
</dbReference>
<dbReference type="PRO" id="PR:Q9FF79"/>
<dbReference type="Proteomes" id="UP000006548">
    <property type="component" value="Chromosome 5"/>
</dbReference>
<dbReference type="ExpressionAtlas" id="Q9FF79">
    <property type="expression patterns" value="baseline and differential"/>
</dbReference>
<dbReference type="GO" id="GO:0030410">
    <property type="term" value="F:nicotianamine synthase activity"/>
    <property type="evidence" value="ECO:0007669"/>
    <property type="project" value="UniProtKB-EC"/>
</dbReference>
<dbReference type="GO" id="GO:0030418">
    <property type="term" value="P:nicotianamine biosynthetic process"/>
    <property type="evidence" value="ECO:0007669"/>
    <property type="project" value="InterPro"/>
</dbReference>
<dbReference type="GO" id="GO:0010233">
    <property type="term" value="P:phloem transport"/>
    <property type="evidence" value="ECO:0000316"/>
    <property type="project" value="TAIR"/>
</dbReference>
<dbReference type="GO" id="GO:0009555">
    <property type="term" value="P:pollen development"/>
    <property type="evidence" value="ECO:0000316"/>
    <property type="project" value="TAIR"/>
</dbReference>
<dbReference type="GO" id="GO:0009860">
    <property type="term" value="P:pollen tube growth"/>
    <property type="evidence" value="ECO:0000316"/>
    <property type="project" value="TAIR"/>
</dbReference>
<dbReference type="FunFam" id="3.40.50.150:FF:000182">
    <property type="entry name" value="Nicotianamine synthase"/>
    <property type="match status" value="1"/>
</dbReference>
<dbReference type="Gene3D" id="3.40.50.150">
    <property type="entry name" value="Vaccinia Virus protein VP39"/>
    <property type="match status" value="1"/>
</dbReference>
<dbReference type="InterPro" id="IPR004298">
    <property type="entry name" value="Nicotian_synth"/>
</dbReference>
<dbReference type="InterPro" id="IPR029063">
    <property type="entry name" value="SAM-dependent_MTases_sf"/>
</dbReference>
<dbReference type="PANTHER" id="PTHR32266:SF14">
    <property type="entry name" value="NICOTIANAMINE SYNTHASE 1"/>
    <property type="match status" value="1"/>
</dbReference>
<dbReference type="PANTHER" id="PTHR32266">
    <property type="entry name" value="NICOTIANAMINE SYNTHASE 3"/>
    <property type="match status" value="1"/>
</dbReference>
<dbReference type="Pfam" id="PF03059">
    <property type="entry name" value="NAS"/>
    <property type="match status" value="1"/>
</dbReference>
<dbReference type="SUPFAM" id="SSF53335">
    <property type="entry name" value="S-adenosyl-L-methionine-dependent methyltransferases"/>
    <property type="match status" value="1"/>
</dbReference>
<dbReference type="PROSITE" id="PS51142">
    <property type="entry name" value="NAS"/>
    <property type="match status" value="1"/>
</dbReference>
<sequence>MACQNNLVVKQIIDLYDQISKLKSLKPSKNVDTLFGQLVSTCLPTDTNIDVTNMCEEVKDMRANLIKLCGEAEGYLEQHFSTILGSLQEDQNPLDHLHIFPYYSNYLKLGKLEFDLLSQHSSHVPTKIAFVGSGPMPLTSIVLAKFHLPNTTFHNFDIDSHANTLASNLVSRDPDLSKRMIFHTTDVLNATEGLDQYDVVFLAALVGMDKESKVKAIEHLEKHMAPGAVLMLRSAHALRAFLYPIVDSSDLKGFQLLTIYHPTDDVVNSVVIARKLGGPTTPGVNGTRGCMFMPCNCSKIHAIMNNRGKKNMIEEFSAIE</sequence>
<organism>
    <name type="scientific">Arabidopsis thaliana</name>
    <name type="common">Mouse-ear cress</name>
    <dbReference type="NCBI Taxonomy" id="3702"/>
    <lineage>
        <taxon>Eukaryota</taxon>
        <taxon>Viridiplantae</taxon>
        <taxon>Streptophyta</taxon>
        <taxon>Embryophyta</taxon>
        <taxon>Tracheophyta</taxon>
        <taxon>Spermatophyta</taxon>
        <taxon>Magnoliopsida</taxon>
        <taxon>eudicotyledons</taxon>
        <taxon>Gunneridae</taxon>
        <taxon>Pentapetalae</taxon>
        <taxon>rosids</taxon>
        <taxon>malvids</taxon>
        <taxon>Brassicales</taxon>
        <taxon>Brassicaceae</taxon>
        <taxon>Camelineae</taxon>
        <taxon>Arabidopsis</taxon>
    </lineage>
</organism>
<accession>Q9FF79</accession>
<accession>Q9ZWF8</accession>
<name>NAS1_ARATH</name>
<proteinExistence type="evidence at transcript level"/>